<proteinExistence type="evidence at protein level"/>
<evidence type="ECO:0000250" key="1">
    <source>
        <dbReference type="UniProtKB" id="Q4V7F5"/>
    </source>
</evidence>
<evidence type="ECO:0000250" key="2">
    <source>
        <dbReference type="UniProtKB" id="Q9CQJ2"/>
    </source>
</evidence>
<evidence type="ECO:0000269" key="3">
    <source>
    </source>
</evidence>
<evidence type="ECO:0000269" key="4">
    <source>
    </source>
</evidence>
<evidence type="ECO:0000269" key="5">
    <source>
    </source>
</evidence>
<evidence type="ECO:0000269" key="6">
    <source>
    </source>
</evidence>
<evidence type="ECO:0000269" key="7">
    <source>
    </source>
</evidence>
<evidence type="ECO:0000269" key="8">
    <source>
    </source>
</evidence>
<evidence type="ECO:0000269" key="9">
    <source>
    </source>
</evidence>
<evidence type="ECO:0000269" key="10">
    <source>
    </source>
</evidence>
<evidence type="ECO:0000269" key="11">
    <source>
    </source>
</evidence>
<evidence type="ECO:0000303" key="12">
    <source>
    </source>
</evidence>
<evidence type="ECO:0000305" key="13"/>
<evidence type="ECO:0007744" key="14">
    <source>
    </source>
</evidence>
<evidence type="ECO:0007829" key="15">
    <source>
        <dbReference type="PDB" id="4PSF"/>
    </source>
</evidence>
<evidence type="ECO:0007829" key="16">
    <source>
        <dbReference type="PDB" id="4PSI"/>
    </source>
</evidence>
<evidence type="ECO:0007829" key="17">
    <source>
        <dbReference type="PDB" id="6GXZ"/>
    </source>
</evidence>
<organism>
    <name type="scientific">Homo sapiens</name>
    <name type="common">Human</name>
    <dbReference type="NCBI Taxonomy" id="9606"/>
    <lineage>
        <taxon>Eukaryota</taxon>
        <taxon>Metazoa</taxon>
        <taxon>Chordata</taxon>
        <taxon>Craniata</taxon>
        <taxon>Vertebrata</taxon>
        <taxon>Euteleostomi</taxon>
        <taxon>Mammalia</taxon>
        <taxon>Eutheria</taxon>
        <taxon>Euarchontoglires</taxon>
        <taxon>Primates</taxon>
        <taxon>Haplorrhini</taxon>
        <taxon>Catarrhini</taxon>
        <taxon>Hominidae</taxon>
        <taxon>Homo</taxon>
    </lineage>
</organism>
<protein>
    <recommendedName>
        <fullName>PIH1 domain-containing protein 1</fullName>
    </recommendedName>
    <alternativeName>
        <fullName>Nucleolar protein 17 homolog</fullName>
    </alternativeName>
</protein>
<comment type="function">
    <text evidence="5 6 8 9">Involved in the assembly of C/D box small nucleolar ribonucleoprotein (snoRNP) particles (PubMed:17636026). Recruits the SWI/SNF complex to the core promoter of rRNA genes and enhances pre-rRNA transcription (PubMed:22368283, PubMed:24036451). Mediates interaction of TELO2 with the R2TP complex which is necessary for the stability of MTOR and SMG1 (PubMed:20864032). Positively regulates the assembly and activity of the mTORC1 complex (PubMed:24036451).</text>
</comment>
<comment type="subunit">
    <text evidence="2 5 6 7 8 9 10 11">Component of the R2TP complex composed at least of RUVBL1, RUVBL2, RPAP3 and PIHD1 (PubMed:20864032). Component of the PAQosome complex which is responsible for the biogenesis of several protein complexes and which consists of R2TP complex members RUVBL1, RUVBL2, RPAP3 and PIH1D1, URI complex members PFDN2, PFDN6, PDRG1, UXT and URI1 as well as ASDURF, POLR2E and DNAAF10/WDR92 (PubMed:31738558). Interacts with phosphorylated TELO2 and mediates interaction of TELO2 with the R2TP complex (PubMed:20864032, PubMed:24656813). Interacts with phosphorylated ECD, EFTUD2/SNRP116, RPB1 and UBR5 and with RPB1 in a phosphorylation-independent manner (PubMed:24656813). Interacts with the core C/D box snoRNP particle components NOP58 and FBL and with RUVBL1/TIP49 (PubMed:17636026). Interacts with RPAP3 and DNAAF10 (PubMed:21078300). Interacts with histone H4 and with SWI/SNF complex member SMARCB1/SNF5 (PubMed:22368283). Interacts with the mTORC1 complex member RPTOR (PubMed:24036451). Interacts with MSL1 (By similarity).</text>
</comment>
<comment type="interaction">
    <interactant intactId="EBI-357318">
        <id>Q9NWS0</id>
    </interactant>
    <interactant intactId="EBI-358049">
        <id>Q13895</id>
        <label>BYSL</label>
    </interactant>
    <organismsDiffer>false</organismsDiffer>
    <experiments>3</experiments>
</comment>
<comment type="interaction">
    <interactant intactId="EBI-357318">
        <id>Q9NWS0</id>
    </interactant>
    <interactant intactId="EBI-5278764">
        <id>Q96GN5</id>
        <label>CDCA7L</label>
    </interactant>
    <organismsDiffer>false</organismsDiffer>
    <experiments>3</experiments>
</comment>
<comment type="interaction">
    <interactant intactId="EBI-357318">
        <id>Q9NWS0</id>
    </interactant>
    <interactant intactId="EBI-769261">
        <id>Q96JC9</id>
        <label>EAF1</label>
    </interactant>
    <organismsDiffer>false</organismsDiffer>
    <experiments>3</experiments>
</comment>
<comment type="interaction">
    <interactant intactId="EBI-357318">
        <id>Q9NWS0</id>
    </interactant>
    <interactant intactId="EBI-2557598">
        <id>O95905</id>
        <label>ECD</label>
    </interactant>
    <organismsDiffer>false</organismsDiffer>
    <experiments>11</experiments>
</comment>
<comment type="interaction">
    <interactant intactId="EBI-357318">
        <id>Q9NWS0</id>
    </interactant>
    <interactant intactId="EBI-6658203">
        <id>Q86YD7</id>
        <label>FAM90A1</label>
    </interactant>
    <organismsDiffer>false</organismsDiffer>
    <experiments>5</experiments>
</comment>
<comment type="interaction">
    <interactant intactId="EBI-357318">
        <id>Q9NWS0</id>
    </interactant>
    <interactant intactId="EBI-5235630">
        <id>Q9Y4F1</id>
        <label>FARP1</label>
    </interactant>
    <organismsDiffer>false</organismsDiffer>
    <experiments>3</experiments>
</comment>
<comment type="interaction">
    <interactant intactId="EBI-357318">
        <id>Q9NWS0</id>
    </interactant>
    <interactant intactId="EBI-744104">
        <id>P55040</id>
        <label>GEM</label>
    </interactant>
    <organismsDiffer>false</organismsDiffer>
    <experiments>3</experiments>
</comment>
<comment type="interaction">
    <interactant intactId="EBI-357318">
        <id>Q9NWS0</id>
    </interactant>
    <interactant intactId="EBI-17658306">
        <id>Q96II8-3</id>
        <label>LRCH3</label>
    </interactant>
    <organismsDiffer>false</organismsDiffer>
    <experiments>3</experiments>
</comment>
<comment type="interaction">
    <interactant intactId="EBI-357318">
        <id>Q9NWS0</id>
    </interactant>
    <interactant intactId="EBI-1048159">
        <id>P55081</id>
        <label>MFAP1</label>
    </interactant>
    <organismsDiffer>false</organismsDiffer>
    <experiments>3</experiments>
</comment>
<comment type="interaction">
    <interactant intactId="EBI-357318">
        <id>Q9NWS0</id>
    </interactant>
    <interactant intactId="EBI-2555085">
        <id>Q8IVT2</id>
        <label>MISP</label>
    </interactant>
    <organismsDiffer>false</organismsDiffer>
    <experiments>3</experiments>
</comment>
<comment type="interaction">
    <interactant intactId="EBI-357318">
        <id>Q9NWS0</id>
    </interactant>
    <interactant intactId="EBI-12014286">
        <id>Q494U1-3</id>
        <label>PLEKHN1</label>
    </interactant>
    <organismsDiffer>false</organismsDiffer>
    <experiments>3</experiments>
</comment>
<comment type="interaction">
    <interactant intactId="EBI-357318">
        <id>Q9NWS0</id>
    </interactant>
    <interactant intactId="EBI-740322">
        <id>Q93062</id>
        <label>RBPMS</label>
    </interactant>
    <organismsDiffer>false</organismsDiffer>
    <experiments>3</experiments>
</comment>
<comment type="interaction">
    <interactant intactId="EBI-357318">
        <id>Q9NWS0</id>
    </interactant>
    <interactant intactId="EBI-1504830">
        <id>Q9P2K3-2</id>
        <label>RCOR3</label>
    </interactant>
    <organismsDiffer>false</organismsDiffer>
    <experiments>3</experiments>
</comment>
<comment type="interaction">
    <interactant intactId="EBI-357318">
        <id>Q9NWS0</id>
    </interactant>
    <interactant intactId="EBI-395878">
        <id>Q8IXW5</id>
        <label>RPAP2</label>
    </interactant>
    <organismsDiffer>false</organismsDiffer>
    <experiments>8</experiments>
</comment>
<comment type="interaction">
    <interactant intactId="EBI-357318">
        <id>Q9NWS0</id>
    </interactant>
    <interactant intactId="EBI-748391">
        <id>Q9BWG6</id>
        <label>SCNM1</label>
    </interactant>
    <organismsDiffer>false</organismsDiffer>
    <experiments>3</experiments>
</comment>
<comment type="interaction">
    <interactant intactId="EBI-357318">
        <id>Q9NWS0</id>
    </interactant>
    <interactant intactId="EBI-693002">
        <id>Q8WYJ6</id>
        <label>SEPTIN1</label>
    </interactant>
    <organismsDiffer>false</organismsDiffer>
    <experiments>3</experiments>
</comment>
<comment type="interaction">
    <interactant intactId="EBI-357318">
        <id>Q9NWS0</id>
    </interactant>
    <interactant intactId="EBI-358489">
        <id>Q96GM5</id>
        <label>SMARCD1</label>
    </interactant>
    <organismsDiffer>false</organismsDiffer>
    <experiments>3</experiments>
</comment>
<comment type="interaction">
    <interactant intactId="EBI-357318">
        <id>Q9NWS0</id>
    </interactant>
    <interactant intactId="EBI-1043674">
        <id>Q9Y4R8</id>
        <label>TELO2</label>
    </interactant>
    <organismsDiffer>false</organismsDiffer>
    <experiments>14</experiments>
</comment>
<comment type="interaction">
    <interactant intactId="EBI-357318">
        <id>Q9NWS0</id>
    </interactant>
    <interactant intactId="EBI-7543499">
        <id>Q8IZW8</id>
        <label>TNS4</label>
    </interactant>
    <organismsDiffer>false</organismsDiffer>
    <experiments>3</experiments>
</comment>
<comment type="interaction">
    <interactant intactId="EBI-357318">
        <id>Q9NWS0</id>
    </interactant>
    <interactant intactId="EBI-739485">
        <id>Q9Y3Q8</id>
        <label>TSC22D4</label>
    </interactant>
    <organismsDiffer>false</organismsDiffer>
    <experiments>4</experiments>
</comment>
<comment type="interaction">
    <interactant intactId="EBI-357318">
        <id>Q9NWS0</id>
    </interactant>
    <interactant intactId="EBI-1634999">
        <id>P60122</id>
        <label>Ruvbl1</label>
    </interactant>
    <organismsDiffer>true</organismsDiffer>
    <experiments>2</experiments>
</comment>
<comment type="subcellular location">
    <subcellularLocation>
        <location evidence="2">Nucleus</location>
    </subcellularLocation>
</comment>
<comment type="alternative products">
    <event type="alternative splicing"/>
    <isoform>
        <id>Q9NWS0-1</id>
        <name>1</name>
        <sequence type="displayed"/>
    </isoform>
    <isoform>
        <id>Q9NWS0-2</id>
        <name>2</name>
        <sequence type="described" ref="VSP_044424"/>
    </isoform>
    <isoform>
        <id>Q9NWS0-3</id>
        <name>3</name>
        <sequence type="described" ref="VSP_044425"/>
    </isoform>
</comment>
<comment type="tissue specificity">
    <text evidence="7 9">Expressed at low levels in normal mammary epithelial cells (at protein level) (PubMed:24036451). Highest expression in lung, leukocyte and placenta. Expressed at lower levels in brain, prostate, colon, heart, small intestine, liver, ovary, pancreas, skeletal muscle, spleen, testis and thymus (PubMed:21078300).</text>
</comment>
<comment type="domain">
    <text evidence="10">The N-terminal region is required for binding to phosphorylated substrates while the C-terminal region binds to the other R2TP complex components.</text>
</comment>
<comment type="similarity">
    <text evidence="13">Belongs to the PIH1 family.</text>
</comment>
<name>PIHD1_HUMAN</name>
<feature type="chain" id="PRO_0000307328" description="PIH1 domain-containing protein 1">
    <location>
        <begin position="1"/>
        <end position="290"/>
    </location>
</feature>
<feature type="site" description="Interacts with TELO2" evidence="10">
    <location>
        <position position="57"/>
    </location>
</feature>
<feature type="site" description="Interacts with TELO2" evidence="10">
    <location>
        <position position="64"/>
    </location>
</feature>
<feature type="site" description="Interacts with TELO2" evidence="2">
    <location>
        <position position="113"/>
    </location>
</feature>
<feature type="modified residue" description="Phosphoserine" evidence="1">
    <location>
        <position position="12"/>
    </location>
</feature>
<feature type="modified residue" description="Phosphoserine" evidence="14">
    <location>
        <position position="173"/>
    </location>
</feature>
<feature type="splice variant" id="VSP_044424" description="In isoform 2." evidence="12">
    <original>ASKELQQAQTTRPESTQIQPQPGFCIKTNSSEGKVFINICHSPSIPPPADVTEEELLQMLEEDQAGFRIPMSLGEPHAELDAKGQGCTAYDVAVNSDFYRRMQNSDFLRELVITIAREGLEDKYNLQLNPEWRMMKNRPFMGSISQQNIRSEQRPRIQELGDLYTPAPGRAESGPEKPHLNLWLEAPDLLLAEVDLPKLDGALGLSLEIGENRLVMGGPQQLYHLDAYIPLQINSHESKAAFHRKRKQLMVAMPLLPVPS</original>
    <variation>LSCIRIAPFEEQMRGLMAQTPSLEVVFLYTGLEGAPASPDNQTRIDTNPASAWFLHKDQLLGREGFHQHLPLPLYPSSRRRDRGGAASDARGGPSWVSHPHESGRASCRTGCKRPGMYRLRRSCQQRLLPEDAEQRFLAGARDHHRQGGP</variation>
    <location>
        <begin position="31"/>
        <end position="290"/>
    </location>
</feature>
<feature type="splice variant" id="VSP_044425" description="In isoform 3." evidence="12">
    <original>KGQGCTAYDVAVNSDFYRRMQNSDFLRELVITIAREGLEDKYNLQLNPEWRMMKNRPFMGSISQQNIRSEQRPRIQELGDLYTPAPGRAESGPEKPHLNLWLEAPDLLLAEVDLPKLDGALGLSLEIGENRLVMGGPQQLYHLDAYIPLQINSHESKAAFHRKRKQLMVAMPLLPVPS</original>
    <variation>SQCPQRTQESGPLGPFFPRTQESWAQDPPPSAPGDLAPRSDSFPYGRSLVPWTSHTRAVLVLPPGQAGTFPCPTPGPGGLGRVLFVH</variation>
    <location>
        <begin position="113"/>
        <end position="290"/>
    </location>
</feature>
<feature type="sequence variant" id="VAR_035410" description="In dbSNP:rs2293012." evidence="3">
    <original>M</original>
    <variation>L</variation>
    <location>
        <position position="9"/>
    </location>
</feature>
<feature type="sequence variant" id="VAR_035411" description="In dbSNP:rs2293013." evidence="3">
    <original>G</original>
    <variation>E</variation>
    <location>
        <position position="10"/>
    </location>
</feature>
<feature type="sequence variant" id="VAR_035412" description="In dbSNP:rs13394." evidence="4">
    <original>V</original>
    <variation>I</variation>
    <location>
        <position position="224"/>
    </location>
</feature>
<feature type="sequence variant" id="VAR_035413" description="In dbSNP:rs34198213.">
    <original>D</original>
    <variation>E</variation>
    <location>
        <position position="230"/>
    </location>
</feature>
<feature type="sequence variant" id="VAR_035414" description="In dbSNP:rs7462." evidence="4">
    <original>P</original>
    <variation>L</variation>
    <location>
        <position position="287"/>
    </location>
</feature>
<feature type="mutagenesis site" description="Abolishes binding to histone H4." evidence="8">
    <original>F</original>
    <variation>A</variation>
    <location>
        <position position="54"/>
    </location>
</feature>
<feature type="mutagenesis site" description="No effect on binding to histone H4." evidence="8">
    <original>C</original>
    <variation>A</variation>
    <location>
        <position position="55"/>
    </location>
</feature>
<feature type="mutagenesis site" description="Abolishes binding to TELO2." evidence="10">
    <original>K</original>
    <variation>A</variation>
    <location>
        <position position="57"/>
    </location>
</feature>
<feature type="mutagenesis site" description="Abolishes binding to ECD, EFTUD2, RPB1, TELO2 and UBR5." evidence="10">
    <original>K</original>
    <variation>A</variation>
    <location>
        <position position="64"/>
    </location>
</feature>
<feature type="mutagenesis site" description="Reduces binding to TELO2." evidence="10">
    <original>K</original>
    <variation>A</variation>
    <location>
        <position position="113"/>
    </location>
</feature>
<feature type="mutagenesis site" description="Reduces binding to TELO2." evidence="10">
    <original>R</original>
    <variation>A</variation>
    <location>
        <position position="163"/>
    </location>
</feature>
<feature type="mutagenesis site" description="Reduces binding to TELO2." evidence="10">
    <original>K</original>
    <variation>A</variation>
    <location>
        <position position="166"/>
    </location>
</feature>
<feature type="mutagenesis site" description="Abolishes binding to TELO2." evidence="10">
    <original>R</original>
    <variation>A</variation>
    <location>
        <position position="168"/>
    </location>
</feature>
<feature type="sequence conflict" description="In Ref. 2; AAH01108." evidence="13" ref="2">
    <original>MG</original>
    <variation>LE</variation>
    <location>
        <begin position="9"/>
        <end position="10"/>
    </location>
</feature>
<feature type="sequence conflict" description="In Ref. 2; BAG57848." evidence="13" ref="2">
    <original>S</original>
    <variation>G</variation>
    <location>
        <position position="102"/>
    </location>
</feature>
<feature type="strand" evidence="15">
    <location>
        <begin position="51"/>
        <end position="59"/>
    </location>
</feature>
<feature type="strand" evidence="15">
    <location>
        <begin position="61"/>
        <end position="72"/>
    </location>
</feature>
<feature type="helix" evidence="15">
    <location>
        <begin position="83"/>
        <end position="92"/>
    </location>
</feature>
<feature type="strand" evidence="15">
    <location>
        <begin position="99"/>
        <end position="101"/>
    </location>
</feature>
<feature type="strand" evidence="15">
    <location>
        <begin position="107"/>
        <end position="110"/>
    </location>
</feature>
<feature type="strand" evidence="15">
    <location>
        <begin position="116"/>
        <end position="125"/>
    </location>
</feature>
<feature type="helix" evidence="15">
    <location>
        <begin position="126"/>
        <end position="133"/>
    </location>
</feature>
<feature type="helix" evidence="15">
    <location>
        <begin position="136"/>
        <end position="154"/>
    </location>
</feature>
<feature type="strand" evidence="16">
    <location>
        <begin position="163"/>
        <end position="167"/>
    </location>
</feature>
<feature type="strand" evidence="17">
    <location>
        <begin position="209"/>
        <end position="216"/>
    </location>
</feature>
<feature type="strand" evidence="17">
    <location>
        <begin position="219"/>
        <end position="225"/>
    </location>
</feature>
<feature type="strand" evidence="17">
    <location>
        <begin position="237"/>
        <end position="239"/>
    </location>
</feature>
<feature type="strand" evidence="17">
    <location>
        <begin position="241"/>
        <end position="246"/>
    </location>
</feature>
<feature type="strand" evidence="17">
    <location>
        <begin position="255"/>
        <end position="258"/>
    </location>
</feature>
<feature type="strand" evidence="17">
    <location>
        <begin position="269"/>
        <end position="273"/>
    </location>
</feature>
<feature type="turn" evidence="17">
    <location>
        <begin position="274"/>
        <end position="277"/>
    </location>
</feature>
<feature type="strand" evidence="17">
    <location>
        <begin position="278"/>
        <end position="285"/>
    </location>
</feature>
<keyword id="KW-0002">3D-structure</keyword>
<keyword id="KW-0025">Alternative splicing</keyword>
<keyword id="KW-0539">Nucleus</keyword>
<keyword id="KW-0597">Phosphoprotein</keyword>
<keyword id="KW-1267">Proteomics identification</keyword>
<keyword id="KW-1185">Reference proteome</keyword>
<keyword id="KW-0804">Transcription</keyword>
<keyword id="KW-0805">Transcription regulation</keyword>
<gene>
    <name type="primary">PIH1D1</name>
    <name type="synonym">NOP17</name>
</gene>
<dbReference type="EMBL" id="AK000650">
    <property type="protein sequence ID" value="BAA91307.1"/>
    <property type="molecule type" value="mRNA"/>
</dbReference>
<dbReference type="EMBL" id="AK294687">
    <property type="protein sequence ID" value="BAG57848.1"/>
    <property type="molecule type" value="mRNA"/>
</dbReference>
<dbReference type="EMBL" id="AK304476">
    <property type="protein sequence ID" value="BAG65289.1"/>
    <property type="molecule type" value="mRNA"/>
</dbReference>
<dbReference type="EMBL" id="BC001108">
    <property type="protein sequence ID" value="AAH01108.1"/>
    <property type="molecule type" value="mRNA"/>
</dbReference>
<dbReference type="CCDS" id="CCDS12765.1">
    <molecule id="Q9NWS0-1"/>
</dbReference>
<dbReference type="RefSeq" id="NP_060386.1">
    <molecule id="Q9NWS0-1"/>
    <property type="nucleotide sequence ID" value="NM_017916.3"/>
</dbReference>
<dbReference type="RefSeq" id="XP_047294981.1">
    <molecule id="Q9NWS0-2"/>
    <property type="nucleotide sequence ID" value="XM_047439025.1"/>
</dbReference>
<dbReference type="PDB" id="4PSF">
    <property type="method" value="X-ray"/>
    <property type="resolution" value="1.58 A"/>
    <property type="chains" value="A/B=51-174"/>
</dbReference>
<dbReference type="PDB" id="4PSI">
    <property type="method" value="X-ray"/>
    <property type="resolution" value="2.45 A"/>
    <property type="chains" value="A/B=51-174"/>
</dbReference>
<dbReference type="PDB" id="6GXZ">
    <property type="method" value="X-ray"/>
    <property type="resolution" value="2.96 A"/>
    <property type="chains" value="D/E=199-290"/>
</dbReference>
<dbReference type="PDB" id="7AVC">
    <property type="method" value="X-ray"/>
    <property type="resolution" value="1.20 A"/>
    <property type="chains" value="AAA=51-180"/>
</dbReference>
<dbReference type="PDB" id="8BDU">
    <property type="method" value="X-ray"/>
    <property type="resolution" value="2.47 A"/>
    <property type="chains" value="A/B=51-180"/>
</dbReference>
<dbReference type="PDBsum" id="4PSF"/>
<dbReference type="PDBsum" id="4PSI"/>
<dbReference type="PDBsum" id="6GXZ"/>
<dbReference type="PDBsum" id="7AVC"/>
<dbReference type="PDBsum" id="8BDU"/>
<dbReference type="EMDB" id="EMD-4289"/>
<dbReference type="EMDB" id="EMD-4290"/>
<dbReference type="EMDB" id="EMD-4291"/>
<dbReference type="EMDB" id="EMD-4554"/>
<dbReference type="EMDB" id="EMD-4555"/>
<dbReference type="EMDB" id="EMD-4556"/>
<dbReference type="EMDB" id="EMD-4557"/>
<dbReference type="SMR" id="Q9NWS0"/>
<dbReference type="BioGRID" id="120343">
    <property type="interactions" value="743"/>
</dbReference>
<dbReference type="ComplexPortal" id="CPX-6143">
    <property type="entry name" value="R2TP core co-chaperone complex"/>
</dbReference>
<dbReference type="CORUM" id="Q9NWS0"/>
<dbReference type="FunCoup" id="Q9NWS0">
    <property type="interactions" value="1514"/>
</dbReference>
<dbReference type="IntAct" id="Q9NWS0">
    <property type="interactions" value="114"/>
</dbReference>
<dbReference type="MINT" id="Q9NWS0"/>
<dbReference type="STRING" id="9606.ENSP00000262265"/>
<dbReference type="GlyGen" id="Q9NWS0">
    <property type="glycosylation" value="1 site, 1 O-linked glycan (1 site)"/>
</dbReference>
<dbReference type="iPTMnet" id="Q9NWS0"/>
<dbReference type="PhosphoSitePlus" id="Q9NWS0"/>
<dbReference type="BioMuta" id="PIH1D1"/>
<dbReference type="DMDM" id="74719379"/>
<dbReference type="jPOST" id="Q9NWS0"/>
<dbReference type="MassIVE" id="Q9NWS0"/>
<dbReference type="PaxDb" id="9606-ENSP00000262265"/>
<dbReference type="PeptideAtlas" id="Q9NWS0"/>
<dbReference type="ProteomicsDB" id="82964">
    <molecule id="Q9NWS0-1"/>
</dbReference>
<dbReference type="Pumba" id="Q9NWS0"/>
<dbReference type="Antibodypedia" id="32006">
    <property type="antibodies" value="235 antibodies from 24 providers"/>
</dbReference>
<dbReference type="DNASU" id="55011"/>
<dbReference type="Ensembl" id="ENST00000262265.10">
    <molecule id="Q9NWS0-1"/>
    <property type="protein sequence ID" value="ENSP00000262265.4"/>
    <property type="gene ID" value="ENSG00000104872.12"/>
</dbReference>
<dbReference type="Ensembl" id="ENST00000596049.5">
    <molecule id="Q9NWS0-1"/>
    <property type="protein sequence ID" value="ENSP00000470445.1"/>
    <property type="gene ID" value="ENSG00000104872.12"/>
</dbReference>
<dbReference type="GeneID" id="55011"/>
<dbReference type="KEGG" id="hsa:55011"/>
<dbReference type="MANE-Select" id="ENST00000262265.10">
    <property type="protein sequence ID" value="ENSP00000262265.4"/>
    <property type="RefSeq nucleotide sequence ID" value="NM_017916.3"/>
    <property type="RefSeq protein sequence ID" value="NP_060386.1"/>
</dbReference>
<dbReference type="UCSC" id="uc002pns.3">
    <molecule id="Q9NWS0-1"/>
    <property type="organism name" value="human"/>
</dbReference>
<dbReference type="AGR" id="HGNC:26075"/>
<dbReference type="CTD" id="55011"/>
<dbReference type="DisGeNET" id="55011"/>
<dbReference type="GeneCards" id="PIH1D1"/>
<dbReference type="HGNC" id="HGNC:26075">
    <property type="gene designation" value="PIH1D1"/>
</dbReference>
<dbReference type="HPA" id="ENSG00000104872">
    <property type="expression patterns" value="Low tissue specificity"/>
</dbReference>
<dbReference type="MIM" id="611480">
    <property type="type" value="gene"/>
</dbReference>
<dbReference type="neXtProt" id="NX_Q9NWS0"/>
<dbReference type="OpenTargets" id="ENSG00000104872"/>
<dbReference type="PharmGKB" id="PA162399535"/>
<dbReference type="VEuPathDB" id="HostDB:ENSG00000104872"/>
<dbReference type="eggNOG" id="KOG4356">
    <property type="taxonomic scope" value="Eukaryota"/>
</dbReference>
<dbReference type="GeneTree" id="ENSGT00510000048192"/>
<dbReference type="InParanoid" id="Q9NWS0"/>
<dbReference type="OMA" id="KLKNRKC"/>
<dbReference type="OrthoDB" id="5135119at2759"/>
<dbReference type="PAN-GO" id="Q9NWS0">
    <property type="GO annotations" value="5 GO annotations based on evolutionary models"/>
</dbReference>
<dbReference type="PhylomeDB" id="Q9NWS0"/>
<dbReference type="TreeFam" id="TF324376"/>
<dbReference type="PathwayCommons" id="Q9NWS0"/>
<dbReference type="SignaLink" id="Q9NWS0"/>
<dbReference type="SIGNOR" id="Q9NWS0"/>
<dbReference type="BioGRID-ORCS" id="55011">
    <property type="hits" value="47 hits in 1156 CRISPR screens"/>
</dbReference>
<dbReference type="ChiTaRS" id="PIH1D1">
    <property type="organism name" value="human"/>
</dbReference>
<dbReference type="EvolutionaryTrace" id="Q9NWS0"/>
<dbReference type="GenomeRNAi" id="55011"/>
<dbReference type="Pharos" id="Q9NWS0">
    <property type="development level" value="Tbio"/>
</dbReference>
<dbReference type="PRO" id="PR:Q9NWS0"/>
<dbReference type="Proteomes" id="UP000005640">
    <property type="component" value="Chromosome 19"/>
</dbReference>
<dbReference type="RNAct" id="Q9NWS0">
    <property type="molecule type" value="protein"/>
</dbReference>
<dbReference type="Bgee" id="ENSG00000104872">
    <property type="expression patterns" value="Expressed in granulocyte and 202 other cell types or tissues"/>
</dbReference>
<dbReference type="ExpressionAtlas" id="Q9NWS0">
    <property type="expression patterns" value="baseline and differential"/>
</dbReference>
<dbReference type="GO" id="GO:0005737">
    <property type="term" value="C:cytoplasm"/>
    <property type="evidence" value="ECO:0000314"/>
    <property type="project" value="UniProtKB"/>
</dbReference>
<dbReference type="GO" id="GO:0005730">
    <property type="term" value="C:nucleolus"/>
    <property type="evidence" value="ECO:0000314"/>
    <property type="project" value="UniProtKB"/>
</dbReference>
<dbReference type="GO" id="GO:0005634">
    <property type="term" value="C:nucleus"/>
    <property type="evidence" value="ECO:0000314"/>
    <property type="project" value="UniProtKB"/>
</dbReference>
<dbReference type="GO" id="GO:0070761">
    <property type="term" value="C:pre-snoRNP complex"/>
    <property type="evidence" value="ECO:0000314"/>
    <property type="project" value="BHF-UCL"/>
</dbReference>
<dbReference type="GO" id="GO:0097255">
    <property type="term" value="C:R2TP complex"/>
    <property type="evidence" value="ECO:0000314"/>
    <property type="project" value="UniProtKB"/>
</dbReference>
<dbReference type="GO" id="GO:1990904">
    <property type="term" value="C:ribonucleoprotein complex"/>
    <property type="evidence" value="ECO:0000318"/>
    <property type="project" value="GO_Central"/>
</dbReference>
<dbReference type="GO" id="GO:1990062">
    <property type="term" value="C:RPAP3/R2TP/prefoldin-like complex"/>
    <property type="evidence" value="ECO:0000353"/>
    <property type="project" value="ComplexPortal"/>
</dbReference>
<dbReference type="GO" id="GO:0051117">
    <property type="term" value="F:ATPase binding"/>
    <property type="evidence" value="ECO:0000353"/>
    <property type="project" value="UniProtKB"/>
</dbReference>
<dbReference type="GO" id="GO:0042393">
    <property type="term" value="F:histone binding"/>
    <property type="evidence" value="ECO:0000353"/>
    <property type="project" value="UniProtKB"/>
</dbReference>
<dbReference type="GO" id="GO:0140566">
    <property type="term" value="F:histone reader activity"/>
    <property type="evidence" value="ECO:0000315"/>
    <property type="project" value="UniProtKB"/>
</dbReference>
<dbReference type="GO" id="GO:0051219">
    <property type="term" value="F:phosphoprotein binding"/>
    <property type="evidence" value="ECO:0000353"/>
    <property type="project" value="UniProtKB"/>
</dbReference>
<dbReference type="GO" id="GO:0019901">
    <property type="term" value="F:protein kinase binding"/>
    <property type="evidence" value="ECO:0000353"/>
    <property type="project" value="UniProtKB"/>
</dbReference>
<dbReference type="GO" id="GO:0000492">
    <property type="term" value="P:box C/D snoRNP assembly"/>
    <property type="evidence" value="ECO:0000315"/>
    <property type="project" value="BHF-UCL"/>
</dbReference>
<dbReference type="GO" id="GO:0006338">
    <property type="term" value="P:chromatin remodeling"/>
    <property type="evidence" value="ECO:0000315"/>
    <property type="project" value="UniProtKB"/>
</dbReference>
<dbReference type="GO" id="GO:0030855">
    <property type="term" value="P:epithelial cell differentiation"/>
    <property type="evidence" value="ECO:0000270"/>
    <property type="project" value="UniProtKB"/>
</dbReference>
<dbReference type="GO" id="GO:1902661">
    <property type="term" value="P:positive regulation of glucose mediated signaling pathway"/>
    <property type="evidence" value="ECO:0000315"/>
    <property type="project" value="UniProtKB"/>
</dbReference>
<dbReference type="GO" id="GO:0071902">
    <property type="term" value="P:positive regulation of protein serine/threonine kinase activity"/>
    <property type="evidence" value="ECO:0000315"/>
    <property type="project" value="UniProtKB"/>
</dbReference>
<dbReference type="GO" id="GO:1904263">
    <property type="term" value="P:positive regulation of TORC1 signaling"/>
    <property type="evidence" value="ECO:0000315"/>
    <property type="project" value="UniProtKB"/>
</dbReference>
<dbReference type="GO" id="GO:1901838">
    <property type="term" value="P:positive regulation of transcription of nucleolar large rRNA by RNA polymerase I"/>
    <property type="evidence" value="ECO:0000315"/>
    <property type="project" value="UniProtKB"/>
</dbReference>
<dbReference type="GO" id="GO:0050821">
    <property type="term" value="P:protein stabilization"/>
    <property type="evidence" value="ECO:0000303"/>
    <property type="project" value="ComplexPortal"/>
</dbReference>
<dbReference type="GO" id="GO:0006364">
    <property type="term" value="P:rRNA processing"/>
    <property type="evidence" value="ECO:0000318"/>
    <property type="project" value="GO_Central"/>
</dbReference>
<dbReference type="GO" id="GO:0048254">
    <property type="term" value="P:snoRNA localization"/>
    <property type="evidence" value="ECO:0000315"/>
    <property type="project" value="UniProtKB"/>
</dbReference>
<dbReference type="GO" id="GO:1905669">
    <property type="term" value="P:TORC1 complex assembly"/>
    <property type="evidence" value="ECO:0000314"/>
    <property type="project" value="UniProtKB"/>
</dbReference>
<dbReference type="InterPro" id="IPR050734">
    <property type="entry name" value="PIH1/Kintoun_subfamily"/>
</dbReference>
<dbReference type="InterPro" id="IPR012981">
    <property type="entry name" value="PIH1_N"/>
</dbReference>
<dbReference type="InterPro" id="IPR041442">
    <property type="entry name" value="PIH1D1/2/3_CS-like"/>
</dbReference>
<dbReference type="PANTHER" id="PTHR22997">
    <property type="entry name" value="PIH1 DOMAIN-CONTAINING PROTEIN 1"/>
    <property type="match status" value="1"/>
</dbReference>
<dbReference type="PANTHER" id="PTHR22997:SF0">
    <property type="entry name" value="PIH1 DOMAIN-CONTAINING PROTEIN 1"/>
    <property type="match status" value="1"/>
</dbReference>
<dbReference type="Pfam" id="PF08190">
    <property type="entry name" value="PIH1"/>
    <property type="match status" value="1"/>
</dbReference>
<dbReference type="Pfam" id="PF18201">
    <property type="entry name" value="PIH1_CS"/>
    <property type="match status" value="1"/>
</dbReference>
<sequence>MANPKLLGMGLSEAEAIGADSARFEELLLQASKELQQAQTTRPESTQIQPQPGFCIKTNSSEGKVFINICHSPSIPPPADVTEEELLQMLEEDQAGFRIPMSLGEPHAELDAKGQGCTAYDVAVNSDFYRRMQNSDFLRELVITIAREGLEDKYNLQLNPEWRMMKNRPFMGSISQQNIRSEQRPRIQELGDLYTPAPGRAESGPEKPHLNLWLEAPDLLLAEVDLPKLDGALGLSLEIGENRLVMGGPQQLYHLDAYIPLQINSHESKAAFHRKRKQLMVAMPLLPVPS</sequence>
<reference key="1">
    <citation type="journal article" date="2004" name="Nat. Genet.">
        <title>Complete sequencing and characterization of 21,243 full-length human cDNAs.</title>
        <authorList>
            <person name="Ota T."/>
            <person name="Suzuki Y."/>
            <person name="Nishikawa T."/>
            <person name="Otsuki T."/>
            <person name="Sugiyama T."/>
            <person name="Irie R."/>
            <person name="Wakamatsu A."/>
            <person name="Hayashi K."/>
            <person name="Sato H."/>
            <person name="Nagai K."/>
            <person name="Kimura K."/>
            <person name="Makita H."/>
            <person name="Sekine M."/>
            <person name="Obayashi M."/>
            <person name="Nishi T."/>
            <person name="Shibahara T."/>
            <person name="Tanaka T."/>
            <person name="Ishii S."/>
            <person name="Yamamoto J."/>
            <person name="Saito K."/>
            <person name="Kawai Y."/>
            <person name="Isono Y."/>
            <person name="Nakamura Y."/>
            <person name="Nagahari K."/>
            <person name="Murakami K."/>
            <person name="Yasuda T."/>
            <person name="Iwayanagi T."/>
            <person name="Wagatsuma M."/>
            <person name="Shiratori A."/>
            <person name="Sudo H."/>
            <person name="Hosoiri T."/>
            <person name="Kaku Y."/>
            <person name="Kodaira H."/>
            <person name="Kondo H."/>
            <person name="Sugawara M."/>
            <person name="Takahashi M."/>
            <person name="Kanda K."/>
            <person name="Yokoi T."/>
            <person name="Furuya T."/>
            <person name="Kikkawa E."/>
            <person name="Omura Y."/>
            <person name="Abe K."/>
            <person name="Kamihara K."/>
            <person name="Katsuta N."/>
            <person name="Sato K."/>
            <person name="Tanikawa M."/>
            <person name="Yamazaki M."/>
            <person name="Ninomiya K."/>
            <person name="Ishibashi T."/>
            <person name="Yamashita H."/>
            <person name="Murakawa K."/>
            <person name="Fujimori K."/>
            <person name="Tanai H."/>
            <person name="Kimata M."/>
            <person name="Watanabe M."/>
            <person name="Hiraoka S."/>
            <person name="Chiba Y."/>
            <person name="Ishida S."/>
            <person name="Ono Y."/>
            <person name="Takiguchi S."/>
            <person name="Watanabe S."/>
            <person name="Yosida M."/>
            <person name="Hotuta T."/>
            <person name="Kusano J."/>
            <person name="Kanehori K."/>
            <person name="Takahashi-Fujii A."/>
            <person name="Hara H."/>
            <person name="Tanase T.-O."/>
            <person name="Nomura Y."/>
            <person name="Togiya S."/>
            <person name="Komai F."/>
            <person name="Hara R."/>
            <person name="Takeuchi K."/>
            <person name="Arita M."/>
            <person name="Imose N."/>
            <person name="Musashino K."/>
            <person name="Yuuki H."/>
            <person name="Oshima A."/>
            <person name="Sasaki N."/>
            <person name="Aotsuka S."/>
            <person name="Yoshikawa Y."/>
            <person name="Matsunawa H."/>
            <person name="Ichihara T."/>
            <person name="Shiohata N."/>
            <person name="Sano S."/>
            <person name="Moriya S."/>
            <person name="Momiyama H."/>
            <person name="Satoh N."/>
            <person name="Takami S."/>
            <person name="Terashima Y."/>
            <person name="Suzuki O."/>
            <person name="Nakagawa S."/>
            <person name="Senoh A."/>
            <person name="Mizoguchi H."/>
            <person name="Goto Y."/>
            <person name="Shimizu F."/>
            <person name="Wakebe H."/>
            <person name="Hishigaki H."/>
            <person name="Watanabe T."/>
            <person name="Sugiyama A."/>
            <person name="Takemoto M."/>
            <person name="Kawakami B."/>
            <person name="Yamazaki M."/>
            <person name="Watanabe K."/>
            <person name="Kumagai A."/>
            <person name="Itakura S."/>
            <person name="Fukuzumi Y."/>
            <person name="Fujimori Y."/>
            <person name="Komiyama M."/>
            <person name="Tashiro H."/>
            <person name="Tanigami A."/>
            <person name="Fujiwara T."/>
            <person name="Ono T."/>
            <person name="Yamada K."/>
            <person name="Fujii Y."/>
            <person name="Ozaki K."/>
            <person name="Hirao M."/>
            <person name="Ohmori Y."/>
            <person name="Kawabata A."/>
            <person name="Hikiji T."/>
            <person name="Kobatake N."/>
            <person name="Inagaki H."/>
            <person name="Ikema Y."/>
            <person name="Okamoto S."/>
            <person name="Okitani R."/>
            <person name="Kawakami T."/>
            <person name="Noguchi S."/>
            <person name="Itoh T."/>
            <person name="Shigeta K."/>
            <person name="Senba T."/>
            <person name="Matsumura K."/>
            <person name="Nakajima Y."/>
            <person name="Mizuno T."/>
            <person name="Morinaga M."/>
            <person name="Sasaki M."/>
            <person name="Togashi T."/>
            <person name="Oyama M."/>
            <person name="Hata H."/>
            <person name="Watanabe M."/>
            <person name="Komatsu T."/>
            <person name="Mizushima-Sugano J."/>
            <person name="Satoh T."/>
            <person name="Shirai Y."/>
            <person name="Takahashi Y."/>
            <person name="Nakagawa K."/>
            <person name="Okumura K."/>
            <person name="Nagase T."/>
            <person name="Nomura N."/>
            <person name="Kikuchi H."/>
            <person name="Masuho Y."/>
            <person name="Yamashita R."/>
            <person name="Nakai K."/>
            <person name="Yada T."/>
            <person name="Nakamura Y."/>
            <person name="Ohara O."/>
            <person name="Isogai T."/>
            <person name="Sugano S."/>
        </authorList>
    </citation>
    <scope>NUCLEOTIDE SEQUENCE [LARGE SCALE MRNA] (ISOFORMS 1; 2 AND 3)</scope>
    <scope>VARIANTS LEU-9 AND GLU-10</scope>
    <source>
        <tissue>Brain</tissue>
        <tissue>Signet-ring cell carcinoma</tissue>
        <tissue>Uterus</tissue>
    </source>
</reference>
<reference key="2">
    <citation type="journal article" date="2004" name="Genome Res.">
        <title>The status, quality, and expansion of the NIH full-length cDNA project: the Mammalian Gene Collection (MGC).</title>
        <authorList>
            <consortium name="The MGC Project Team"/>
        </authorList>
    </citation>
    <scope>NUCLEOTIDE SEQUENCE [LARGE SCALE MRNA] (ISOFORM 1)</scope>
    <scope>VARIANTS ILE-224 AND LEU-287</scope>
    <source>
        <tissue>Skin</tissue>
    </source>
</reference>
<reference key="3">
    <citation type="journal article" date="2007" name="Mol. Cell. Biol.">
        <title>A dynamic scaffold of pre-snoRNP factors facilitates human box C/D snoRNP assembly.</title>
        <authorList>
            <person name="McKeegan K.S."/>
            <person name="Debieux C.M."/>
            <person name="Boulon S."/>
            <person name="Bertrand E."/>
            <person name="Watkins N.J."/>
        </authorList>
    </citation>
    <scope>FUNCTION</scope>
    <scope>INTERACTION WITH FBL; NOP58 AND RUVBL1</scope>
</reference>
<reference key="4">
    <citation type="journal article" date="2010" name="Biochem. Biophys. Res. Commun.">
        <title>PIH1D1, a subunit of R2TP complex, inhibits doxorubicin-induced apoptosis.</title>
        <authorList>
            <person name="Inoue M."/>
            <person name="Saeki M."/>
            <person name="Egusa H."/>
            <person name="Niwa H."/>
            <person name="Kamisaki Y."/>
        </authorList>
    </citation>
    <scope>INTERACTION WITH RPAP3 AND DNAAF10</scope>
    <scope>TISSUE SPECIFICITY</scope>
</reference>
<reference key="5">
    <citation type="journal article" date="2010" name="Mol. Cell">
        <title>CK2 phospho-dependent binding of R2TP complex to TEL2 is essential for mTOR and SMG1 stability.</title>
        <authorList>
            <person name="Horejsi Z."/>
            <person name="Takai H."/>
            <person name="Adelman C.A."/>
            <person name="Collis S.J."/>
            <person name="Flynn H."/>
            <person name="Maslen S."/>
            <person name="Skehel J.M."/>
            <person name="de Lange T."/>
            <person name="Boulton S.J."/>
        </authorList>
    </citation>
    <scope>FUNCTION</scope>
    <scope>INTERACTION WITH TELO2</scope>
    <scope>IDENTIFICATION IN THE R2TP COMPLEX</scope>
</reference>
<reference key="6">
    <citation type="journal article" date="2011" name="BMC Syst. Biol.">
        <title>Initial characterization of the human central proteome.</title>
        <authorList>
            <person name="Burkard T.R."/>
            <person name="Planyavsky M."/>
            <person name="Kaupe I."/>
            <person name="Breitwieser F.P."/>
            <person name="Buerckstuemmer T."/>
            <person name="Bennett K.L."/>
            <person name="Superti-Furga G."/>
            <person name="Colinge J."/>
        </authorList>
    </citation>
    <scope>IDENTIFICATION BY MASS SPECTROMETRY [LARGE SCALE ANALYSIS]</scope>
</reference>
<reference key="7">
    <citation type="journal article" date="2012" name="J. Mol. Cell Biol.">
        <title>Human PIH1 associates with histone H4 to mediate the glucose-dependent enhancement of pre-rRNA synthesis.</title>
        <authorList>
            <person name="Zhai N."/>
            <person name="Zhao Z.L."/>
            <person name="Cheng M.B."/>
            <person name="Di Y.W."/>
            <person name="Yan H.X."/>
            <person name="Cao C.Y."/>
            <person name="Dai H."/>
            <person name="Zhang Y."/>
            <person name="Shen Y.F."/>
        </authorList>
    </citation>
    <scope>FUNCTION</scope>
    <scope>INTERACTION WITH HISTONE H4 AND SMARCB1</scope>
    <scope>MUTAGENESIS OF PHE-54 AND CYS-55</scope>
</reference>
<reference key="8">
    <citation type="journal article" date="2013" name="FEBS Lett.">
        <title>PIH1D1 interacts with mTOR complex 1 and enhances ribosome RNA transcription.</title>
        <authorList>
            <person name="Kamano Y."/>
            <person name="Saeki M."/>
            <person name="Egusa H."/>
            <person name="Kakihara Y."/>
            <person name="Houry W.A."/>
            <person name="Yatani H."/>
            <person name="Kamisaki Y."/>
        </authorList>
    </citation>
    <scope>FUNCTION</scope>
    <scope>INTERACTION WITH RPTOR</scope>
    <scope>TISSUE SPECIFICITY</scope>
</reference>
<reference key="9">
    <citation type="journal article" date="2013" name="J. Proteome Res.">
        <title>Toward a comprehensive characterization of a human cancer cell phosphoproteome.</title>
        <authorList>
            <person name="Zhou H."/>
            <person name="Di Palma S."/>
            <person name="Preisinger C."/>
            <person name="Peng M."/>
            <person name="Polat A.N."/>
            <person name="Heck A.J."/>
            <person name="Mohammed S."/>
        </authorList>
    </citation>
    <scope>PHOSPHORYLATION [LARGE SCALE ANALYSIS] AT SER-173</scope>
    <scope>IDENTIFICATION BY MASS SPECTROMETRY [LARGE SCALE ANALYSIS]</scope>
    <source>
        <tissue>Erythroleukemia</tissue>
    </source>
</reference>
<reference key="10">
    <citation type="journal article" date="2020" name="J. Proteome Res.">
        <title>Upstream ORF-Encoded ASDURF Is a Novel Prefoldin-like Subunit of the PAQosome.</title>
        <authorList>
            <person name="Cloutier P."/>
            <person name="Poitras C."/>
            <person name="Faubert D."/>
            <person name="Bouchard A."/>
            <person name="Blanchette M."/>
            <person name="Gauthier M.S."/>
            <person name="Coulombe B."/>
        </authorList>
    </citation>
    <scope>IDENTIFICATION IN THE PAQOSOME COMPLEX</scope>
    <scope>IDENTIFICATION BY MASS SPECTROMETRY</scope>
</reference>
<reference key="11">
    <citation type="journal article" date="2014" name="Cell Rep.">
        <title>Phosphorylation-dependent PIH1D1 interactions define substrate specificity of the R2TP cochaperone complex.</title>
        <authorList>
            <person name="Horejsi Z."/>
            <person name="Stach L."/>
            <person name="Flower T.G."/>
            <person name="Joshi D."/>
            <person name="Flynn H."/>
            <person name="Skehel J.M."/>
            <person name="O'Reilly N.J."/>
            <person name="Ogrodowicz R.W."/>
            <person name="Smerdon S.J."/>
            <person name="Boulton S.J."/>
        </authorList>
    </citation>
    <scope>X-RAY CRYSTALLOGRAPHY (1.58 ANGSTROMS) OF 51-174 IN COMPLEX WITH TELO2 PHOSPHOPEPTIDE</scope>
    <scope>INTERACTION WITH EFTUD2; ECD; RPAP3; RPB1; TELO2 AND UBR5</scope>
    <scope>DOMAIN</scope>
    <scope>MUTAGENESIS OF LYS-57; LYS-64; LYS-113; ARG-163; LYS-166 AND ARG-168</scope>
</reference>
<accession>Q9NWS0</accession>
<accession>B4DGN7</accession>
<accession>B4E2X7</accession>
<accession>Q9BVL0</accession>